<geneLocation type="chloroplast"/>
<feature type="chain" id="PRO_0000179736" description="ATP-dependent Clp protease proteolytic subunit">
    <location>
        <begin position="1"/>
        <end position="201"/>
    </location>
</feature>
<feature type="active site" description="Nucleophile" evidence="1">
    <location>
        <position position="101"/>
    </location>
</feature>
<feature type="active site" evidence="1">
    <location>
        <position position="126"/>
    </location>
</feature>
<name>CLPP_CHAGL</name>
<protein>
    <recommendedName>
        <fullName evidence="1">ATP-dependent Clp protease proteolytic subunit</fullName>
        <ecNumber evidence="1">3.4.21.92</ecNumber>
    </recommendedName>
    <alternativeName>
        <fullName evidence="1">Endopeptidase Clp</fullName>
    </alternativeName>
</protein>
<accession>Q8M9Y9</accession>
<reference key="1">
    <citation type="journal article" date="2002" name="Proc. Natl. Acad. Sci. U.S.A.">
        <title>The chloroplast and mitochondrial genome sequences of the charophyte Chaetosphaeridium globosum: insights into the timing of the events that restructured organelle DNAs within the green algal lineage that led to land plants.</title>
        <authorList>
            <person name="Turmel M."/>
            <person name="Otis C."/>
            <person name="Lemieux C."/>
        </authorList>
    </citation>
    <scope>NUCLEOTIDE SEQUENCE [LARGE SCALE GENOMIC DNA]</scope>
    <source>
        <strain>M1311</strain>
    </source>
</reference>
<organism>
    <name type="scientific">Chaetosphaeridium globosum</name>
    <name type="common">Charophycean green alga</name>
    <name type="synonym">Herposteiron globosum</name>
    <dbReference type="NCBI Taxonomy" id="96477"/>
    <lineage>
        <taxon>Eukaryota</taxon>
        <taxon>Viridiplantae</taxon>
        <taxon>Streptophyta</taxon>
        <taxon>Coleochaetophyceae</taxon>
        <taxon>Coleochaetales</taxon>
        <taxon>Chaetosphaeridiaceae</taxon>
        <taxon>Chaetosphaeridium</taxon>
    </lineage>
</organism>
<proteinExistence type="inferred from homology"/>
<gene>
    <name evidence="1" type="primary">clpP</name>
</gene>
<sequence length="201" mass="22548">MPVGVPKVPYRLPGDVQVQWIDLYNRLYRERILFLGQTVNYEIANQIIGLMLYLNGDDKSKDMYLYINSPGGAVVPGIAIYDTMQFVEPEIRTICMGVAASMGSFILTGGEITKRIALPHARVMIHQPSSSYYKDQAGELIMEAEEVLKLRDCITKVYVQRTGKPISVISEDMERDVFMSAKEAKEYGIVDLVALDVDSNS</sequence>
<evidence type="ECO:0000255" key="1">
    <source>
        <dbReference type="HAMAP-Rule" id="MF_00444"/>
    </source>
</evidence>
<comment type="function">
    <text evidence="1">Cleaves peptides in various proteins in a process that requires ATP hydrolysis. Has a chymotrypsin-like activity. Plays a major role in the degradation of misfolded proteins.</text>
</comment>
<comment type="catalytic activity">
    <reaction evidence="1">
        <text>Hydrolysis of proteins to small peptides in the presence of ATP and magnesium. alpha-casein is the usual test substrate. In the absence of ATP, only oligopeptides shorter than five residues are hydrolyzed (such as succinyl-Leu-Tyr-|-NHMec, and Leu-Tyr-Leu-|-Tyr-Trp, in which cleavage of the -Tyr-|-Leu- and -Tyr-|-Trp bonds also occurs).</text>
        <dbReference type="EC" id="3.4.21.92"/>
    </reaction>
</comment>
<comment type="subunit">
    <text>Component of the chloroplastic Clp protease core complex.</text>
</comment>
<comment type="subcellular location">
    <subcellularLocation>
        <location evidence="1">Plastid</location>
        <location evidence="1">Chloroplast stroma</location>
    </subcellularLocation>
</comment>
<comment type="similarity">
    <text evidence="1">Belongs to the peptidase S14 family.</text>
</comment>
<keyword id="KW-0150">Chloroplast</keyword>
<keyword id="KW-0378">Hydrolase</keyword>
<keyword id="KW-0934">Plastid</keyword>
<keyword id="KW-0645">Protease</keyword>
<keyword id="KW-0720">Serine protease</keyword>
<dbReference type="EC" id="3.4.21.92" evidence="1"/>
<dbReference type="EMBL" id="AF494278">
    <property type="protein sequence ID" value="AAM96511.1"/>
    <property type="molecule type" value="Genomic_DNA"/>
</dbReference>
<dbReference type="RefSeq" id="NP_683797.1">
    <property type="nucleotide sequence ID" value="NC_004115.1"/>
</dbReference>
<dbReference type="SMR" id="Q8M9Y9"/>
<dbReference type="MEROPS" id="S14.002"/>
<dbReference type="GeneID" id="860672"/>
<dbReference type="GO" id="GO:0009570">
    <property type="term" value="C:chloroplast stroma"/>
    <property type="evidence" value="ECO:0007669"/>
    <property type="project" value="UniProtKB-SubCell"/>
</dbReference>
<dbReference type="GO" id="GO:0009368">
    <property type="term" value="C:endopeptidase Clp complex"/>
    <property type="evidence" value="ECO:0007669"/>
    <property type="project" value="TreeGrafter"/>
</dbReference>
<dbReference type="GO" id="GO:0004176">
    <property type="term" value="F:ATP-dependent peptidase activity"/>
    <property type="evidence" value="ECO:0007669"/>
    <property type="project" value="InterPro"/>
</dbReference>
<dbReference type="GO" id="GO:0051117">
    <property type="term" value="F:ATPase binding"/>
    <property type="evidence" value="ECO:0007669"/>
    <property type="project" value="TreeGrafter"/>
</dbReference>
<dbReference type="GO" id="GO:0004252">
    <property type="term" value="F:serine-type endopeptidase activity"/>
    <property type="evidence" value="ECO:0007669"/>
    <property type="project" value="UniProtKB-UniRule"/>
</dbReference>
<dbReference type="GO" id="GO:0006515">
    <property type="term" value="P:protein quality control for misfolded or incompletely synthesized proteins"/>
    <property type="evidence" value="ECO:0007669"/>
    <property type="project" value="TreeGrafter"/>
</dbReference>
<dbReference type="CDD" id="cd07017">
    <property type="entry name" value="S14_ClpP_2"/>
    <property type="match status" value="1"/>
</dbReference>
<dbReference type="FunFam" id="3.90.226.10:FF:000006">
    <property type="entry name" value="ATP-dependent Clp protease proteolytic subunit"/>
    <property type="match status" value="1"/>
</dbReference>
<dbReference type="Gene3D" id="3.90.226.10">
    <property type="entry name" value="2-enoyl-CoA Hydratase, Chain A, domain 1"/>
    <property type="match status" value="1"/>
</dbReference>
<dbReference type="HAMAP" id="MF_00444">
    <property type="entry name" value="ClpP"/>
    <property type="match status" value="1"/>
</dbReference>
<dbReference type="InterPro" id="IPR001907">
    <property type="entry name" value="ClpP"/>
</dbReference>
<dbReference type="InterPro" id="IPR029045">
    <property type="entry name" value="ClpP/crotonase-like_dom_sf"/>
</dbReference>
<dbReference type="InterPro" id="IPR023562">
    <property type="entry name" value="ClpP/TepA"/>
</dbReference>
<dbReference type="InterPro" id="IPR033135">
    <property type="entry name" value="ClpP_His_AS"/>
</dbReference>
<dbReference type="InterPro" id="IPR018215">
    <property type="entry name" value="ClpP_Ser_AS"/>
</dbReference>
<dbReference type="PANTHER" id="PTHR10381">
    <property type="entry name" value="ATP-DEPENDENT CLP PROTEASE PROTEOLYTIC SUBUNIT"/>
    <property type="match status" value="1"/>
</dbReference>
<dbReference type="PANTHER" id="PTHR10381:SF15">
    <property type="entry name" value="CHLOROPLASTIC ATP-DEPENDENT CLP PROTEASE PROTEOLYTIC SUBUNIT 1"/>
    <property type="match status" value="1"/>
</dbReference>
<dbReference type="Pfam" id="PF00574">
    <property type="entry name" value="CLP_protease"/>
    <property type="match status" value="1"/>
</dbReference>
<dbReference type="PRINTS" id="PR00127">
    <property type="entry name" value="CLPPROTEASEP"/>
</dbReference>
<dbReference type="SUPFAM" id="SSF52096">
    <property type="entry name" value="ClpP/crotonase"/>
    <property type="match status" value="1"/>
</dbReference>
<dbReference type="PROSITE" id="PS00382">
    <property type="entry name" value="CLP_PROTEASE_HIS"/>
    <property type="match status" value="1"/>
</dbReference>
<dbReference type="PROSITE" id="PS00381">
    <property type="entry name" value="CLP_PROTEASE_SER"/>
    <property type="match status" value="1"/>
</dbReference>